<sequence>MKGLKKKRRIQIIALAFVALAGSTALIGYAMRDGINFFRSPTQVVEAPPPETEVFRIGGLVEKGSLVRGQGETVTFRVTDTNATVPVSFTGVLPDLFAEDAGMVGTGRLVGGVFEASEILAKHDETYMPKEVVDALKEQGVFQHTEDQPQG</sequence>
<feature type="chain" id="PRO_1000189049" description="Cytochrome c-type biogenesis protein CcmE">
    <location>
        <begin position="1"/>
        <end position="151"/>
    </location>
</feature>
<feature type="topological domain" description="Cytoplasmic" evidence="1">
    <location>
        <begin position="1"/>
        <end position="9"/>
    </location>
</feature>
<feature type="transmembrane region" description="Helical; Signal-anchor for type II membrane protein" evidence="1">
    <location>
        <begin position="10"/>
        <end position="30"/>
    </location>
</feature>
<feature type="topological domain" description="Periplasmic" evidence="1">
    <location>
        <begin position="31"/>
        <end position="151"/>
    </location>
</feature>
<feature type="binding site" description="covalent" evidence="1">
    <location>
        <position position="123"/>
    </location>
    <ligand>
        <name>heme</name>
        <dbReference type="ChEBI" id="CHEBI:30413"/>
    </ligand>
</feature>
<feature type="binding site" description="axial binding residue" evidence="1">
    <location>
        <position position="127"/>
    </location>
    <ligand>
        <name>heme</name>
        <dbReference type="ChEBI" id="CHEBI:30413"/>
    </ligand>
    <ligandPart>
        <name>Fe</name>
        <dbReference type="ChEBI" id="CHEBI:18248"/>
    </ligandPart>
</feature>
<dbReference type="EMBL" id="CP001150">
    <property type="protein sequence ID" value="ACM01125.1"/>
    <property type="molecule type" value="Genomic_DNA"/>
</dbReference>
<dbReference type="RefSeq" id="WP_002720104.1">
    <property type="nucleotide sequence ID" value="NC_011963.1"/>
</dbReference>
<dbReference type="SMR" id="B9KSX9"/>
<dbReference type="GeneID" id="67446687"/>
<dbReference type="KEGG" id="rsk:RSKD131_1265"/>
<dbReference type="HOGENOM" id="CLU_079503_1_1_5"/>
<dbReference type="GO" id="GO:0005886">
    <property type="term" value="C:plasma membrane"/>
    <property type="evidence" value="ECO:0007669"/>
    <property type="project" value="UniProtKB-SubCell"/>
</dbReference>
<dbReference type="GO" id="GO:0020037">
    <property type="term" value="F:heme binding"/>
    <property type="evidence" value="ECO:0007669"/>
    <property type="project" value="InterPro"/>
</dbReference>
<dbReference type="GO" id="GO:0046872">
    <property type="term" value="F:metal ion binding"/>
    <property type="evidence" value="ECO:0007669"/>
    <property type="project" value="UniProtKB-KW"/>
</dbReference>
<dbReference type="GO" id="GO:0017004">
    <property type="term" value="P:cytochrome complex assembly"/>
    <property type="evidence" value="ECO:0007669"/>
    <property type="project" value="UniProtKB-KW"/>
</dbReference>
<dbReference type="Gene3D" id="2.40.50.140">
    <property type="entry name" value="Nucleic acid-binding proteins"/>
    <property type="match status" value="1"/>
</dbReference>
<dbReference type="HAMAP" id="MF_01959">
    <property type="entry name" value="CcmE"/>
    <property type="match status" value="1"/>
</dbReference>
<dbReference type="InterPro" id="IPR004329">
    <property type="entry name" value="CcmE"/>
</dbReference>
<dbReference type="InterPro" id="IPR036127">
    <property type="entry name" value="CcmE-like_sf"/>
</dbReference>
<dbReference type="InterPro" id="IPR012340">
    <property type="entry name" value="NA-bd_OB-fold"/>
</dbReference>
<dbReference type="NCBIfam" id="NF009727">
    <property type="entry name" value="PRK13254.1-1"/>
    <property type="match status" value="1"/>
</dbReference>
<dbReference type="NCBIfam" id="NF009731">
    <property type="entry name" value="PRK13254.1-5"/>
    <property type="match status" value="1"/>
</dbReference>
<dbReference type="PANTHER" id="PTHR34128">
    <property type="entry name" value="CYTOCHROME C-TYPE BIOGENESIS PROTEIN CCME HOMOLOG, MITOCHONDRIAL"/>
    <property type="match status" value="1"/>
</dbReference>
<dbReference type="PANTHER" id="PTHR34128:SF2">
    <property type="entry name" value="CYTOCHROME C-TYPE BIOGENESIS PROTEIN CCME HOMOLOG, MITOCHONDRIAL"/>
    <property type="match status" value="1"/>
</dbReference>
<dbReference type="Pfam" id="PF03100">
    <property type="entry name" value="CcmE"/>
    <property type="match status" value="1"/>
</dbReference>
<dbReference type="SUPFAM" id="SSF82093">
    <property type="entry name" value="Heme chaperone CcmE"/>
    <property type="match status" value="1"/>
</dbReference>
<keyword id="KW-0997">Cell inner membrane</keyword>
<keyword id="KW-1003">Cell membrane</keyword>
<keyword id="KW-0201">Cytochrome c-type biogenesis</keyword>
<keyword id="KW-0349">Heme</keyword>
<keyword id="KW-0408">Iron</keyword>
<keyword id="KW-0472">Membrane</keyword>
<keyword id="KW-0479">Metal-binding</keyword>
<keyword id="KW-0735">Signal-anchor</keyword>
<keyword id="KW-0812">Transmembrane</keyword>
<keyword id="KW-1133">Transmembrane helix</keyword>
<comment type="function">
    <text evidence="1">Heme chaperone required for the biogenesis of c-type cytochromes. Transiently binds heme delivered by CcmC and transfers the heme to apo-cytochromes in a process facilitated by CcmF and CcmH.</text>
</comment>
<comment type="subcellular location">
    <subcellularLocation>
        <location evidence="1">Cell inner membrane</location>
        <topology evidence="1">Single-pass type II membrane protein</topology>
        <orientation evidence="1">Periplasmic side</orientation>
    </subcellularLocation>
</comment>
<comment type="similarity">
    <text evidence="1">Belongs to the CcmE/CycJ family.</text>
</comment>
<accession>B9KSX9</accession>
<evidence type="ECO:0000255" key="1">
    <source>
        <dbReference type="HAMAP-Rule" id="MF_01959"/>
    </source>
</evidence>
<reference key="1">
    <citation type="journal article" date="2009" name="J. Bacteriol.">
        <title>Complete genome sequence of Rhodobacter sphaeroides KD131.</title>
        <authorList>
            <person name="Lim S.-K."/>
            <person name="Kim S.J."/>
            <person name="Cha S.H."/>
            <person name="Oh Y.-K."/>
            <person name="Rhee H.-J."/>
            <person name="Kim M.-S."/>
            <person name="Lee J.K."/>
        </authorList>
    </citation>
    <scope>NUCLEOTIDE SEQUENCE [LARGE SCALE GENOMIC DNA]</scope>
    <source>
        <strain>KD131 / KCTC 12085</strain>
    </source>
</reference>
<organism>
    <name type="scientific">Cereibacter sphaeroides (strain KD131 / KCTC 12085)</name>
    <name type="common">Rhodobacter sphaeroides</name>
    <dbReference type="NCBI Taxonomy" id="557760"/>
    <lineage>
        <taxon>Bacteria</taxon>
        <taxon>Pseudomonadati</taxon>
        <taxon>Pseudomonadota</taxon>
        <taxon>Alphaproteobacteria</taxon>
        <taxon>Rhodobacterales</taxon>
        <taxon>Paracoccaceae</taxon>
        <taxon>Cereibacter</taxon>
    </lineage>
</organism>
<gene>
    <name evidence="1" type="primary">ccmE</name>
    <name evidence="1" type="synonym">cycJ</name>
    <name type="ordered locus">RSKD131_1265</name>
</gene>
<protein>
    <recommendedName>
        <fullName evidence="1">Cytochrome c-type biogenesis protein CcmE</fullName>
    </recommendedName>
    <alternativeName>
        <fullName evidence="1">Cytochrome c maturation protein E</fullName>
    </alternativeName>
    <alternativeName>
        <fullName evidence="1">Heme chaperone CcmE</fullName>
    </alternativeName>
</protein>
<name>CCME_CERSK</name>
<proteinExistence type="inferred from homology"/>